<proteinExistence type="inferred from homology"/>
<feature type="chain" id="PRO_1000071938" description="Phenylalanine--tRNA ligase alpha subunit">
    <location>
        <begin position="1"/>
        <end position="465"/>
    </location>
</feature>
<feature type="binding site" evidence="1">
    <location>
        <position position="311"/>
    </location>
    <ligand>
        <name>L-phenylalanine</name>
        <dbReference type="ChEBI" id="CHEBI:58095"/>
    </ligand>
</feature>
<feature type="binding site" evidence="1">
    <location>
        <position position="389"/>
    </location>
    <ligand>
        <name>L-phenylalanine</name>
        <dbReference type="ChEBI" id="CHEBI:58095"/>
    </ligand>
</feature>
<feature type="binding site" evidence="1">
    <location>
        <position position="391"/>
    </location>
    <ligand>
        <name>Mg(2+)</name>
        <dbReference type="ChEBI" id="CHEBI:18420"/>
        <note>shared with beta subunit</note>
    </ligand>
</feature>
<accession>A4YIL1</accession>
<sequence length="465" mass="53192">MLSENEIKILDFLKRRKESTSQEIAEGTGLPLSSVFSIIATLESKGIVKVISEETRKVVRLTDEGKLRTEQGLPEDRLVTLLNGRPLKIQELRNALGKDFEIGFGWARRKGLITLENDTVIPKVSQYVSPEYTALKDLQAGKEPTGEVLEILLRRKLVEVKEEKMLRVQLLREVETRPAELYVTHEMLTTGSWREYEFKPYNVEANPPFFPIGKTHYFRDFIEKVKDLMVGLGFVEVSGDFVETEFFNFDMLFQPQDHPAREIHDSFVIEGKGNLPGSDLVRKVKEVHEKWWRYSWSEDNARRLVLRSQTTAVTARVLSGAPKRIRAFTIGKVFRPDSIDATHLIEFHQMDGLVIEEDFTFRDLLSTLRDIFQGLGVKQVKFKPGYFPFTEPSVEVYGFIEGLGWVEMAGAGLLRKEVTEPAGVFSPAGAWGIGIDRLAMLFLGVKDIRDLYSLDIEYLRSRRVI</sequence>
<organism>
    <name type="scientific">Metallosphaera sedula (strain ATCC 51363 / DSM 5348 / JCM 9185 / NBRC 15509 / TH2)</name>
    <dbReference type="NCBI Taxonomy" id="399549"/>
    <lineage>
        <taxon>Archaea</taxon>
        <taxon>Thermoproteota</taxon>
        <taxon>Thermoprotei</taxon>
        <taxon>Sulfolobales</taxon>
        <taxon>Sulfolobaceae</taxon>
        <taxon>Metallosphaera</taxon>
    </lineage>
</organism>
<dbReference type="EC" id="6.1.1.20" evidence="1"/>
<dbReference type="EMBL" id="CP000682">
    <property type="protein sequence ID" value="ABP96263.1"/>
    <property type="molecule type" value="Genomic_DNA"/>
</dbReference>
<dbReference type="RefSeq" id="WP_012022050.1">
    <property type="nucleotide sequence ID" value="NC_009440.1"/>
</dbReference>
<dbReference type="SMR" id="A4YIL1"/>
<dbReference type="STRING" id="399549.Msed_2124"/>
<dbReference type="GeneID" id="91756661"/>
<dbReference type="KEGG" id="mse:Msed_2124"/>
<dbReference type="eggNOG" id="arCOG00410">
    <property type="taxonomic scope" value="Archaea"/>
</dbReference>
<dbReference type="HOGENOM" id="CLU_025086_2_2_2"/>
<dbReference type="Proteomes" id="UP000000242">
    <property type="component" value="Chromosome"/>
</dbReference>
<dbReference type="GO" id="GO:0005737">
    <property type="term" value="C:cytoplasm"/>
    <property type="evidence" value="ECO:0007669"/>
    <property type="project" value="UniProtKB-SubCell"/>
</dbReference>
<dbReference type="GO" id="GO:0005524">
    <property type="term" value="F:ATP binding"/>
    <property type="evidence" value="ECO:0007669"/>
    <property type="project" value="UniProtKB-UniRule"/>
</dbReference>
<dbReference type="GO" id="GO:0003677">
    <property type="term" value="F:DNA binding"/>
    <property type="evidence" value="ECO:0007669"/>
    <property type="project" value="InterPro"/>
</dbReference>
<dbReference type="GO" id="GO:0000287">
    <property type="term" value="F:magnesium ion binding"/>
    <property type="evidence" value="ECO:0007669"/>
    <property type="project" value="UniProtKB-UniRule"/>
</dbReference>
<dbReference type="GO" id="GO:0004826">
    <property type="term" value="F:phenylalanine-tRNA ligase activity"/>
    <property type="evidence" value="ECO:0007669"/>
    <property type="project" value="UniProtKB-UniRule"/>
</dbReference>
<dbReference type="GO" id="GO:0000049">
    <property type="term" value="F:tRNA binding"/>
    <property type="evidence" value="ECO:0007669"/>
    <property type="project" value="InterPro"/>
</dbReference>
<dbReference type="GO" id="GO:0006432">
    <property type="term" value="P:phenylalanyl-tRNA aminoacylation"/>
    <property type="evidence" value="ECO:0007669"/>
    <property type="project" value="UniProtKB-UniRule"/>
</dbReference>
<dbReference type="GO" id="GO:0006355">
    <property type="term" value="P:regulation of DNA-templated transcription"/>
    <property type="evidence" value="ECO:0007669"/>
    <property type="project" value="InterPro"/>
</dbReference>
<dbReference type="CDD" id="cd00090">
    <property type="entry name" value="HTH_ARSR"/>
    <property type="match status" value="1"/>
</dbReference>
<dbReference type="CDD" id="cd00496">
    <property type="entry name" value="PheRS_alpha_core"/>
    <property type="match status" value="1"/>
</dbReference>
<dbReference type="Gene3D" id="3.30.930.10">
    <property type="entry name" value="Bira Bifunctional Protein, Domain 2"/>
    <property type="match status" value="1"/>
</dbReference>
<dbReference type="Gene3D" id="1.10.10.10">
    <property type="entry name" value="Winged helix-like DNA-binding domain superfamily/Winged helix DNA-binding domain"/>
    <property type="match status" value="1"/>
</dbReference>
<dbReference type="HAMAP" id="MF_00282">
    <property type="entry name" value="Phe_tRNA_synth_alpha2"/>
    <property type="match status" value="1"/>
</dbReference>
<dbReference type="InterPro" id="IPR006195">
    <property type="entry name" value="aa-tRNA-synth_II"/>
</dbReference>
<dbReference type="InterPro" id="IPR045864">
    <property type="entry name" value="aa-tRNA-synth_II/BPL/LPL"/>
</dbReference>
<dbReference type="InterPro" id="IPR011991">
    <property type="entry name" value="ArsR-like_HTH"/>
</dbReference>
<dbReference type="InterPro" id="IPR004529">
    <property type="entry name" value="Phe-tRNA-synth_IIc_asu"/>
</dbReference>
<dbReference type="InterPro" id="IPR022917">
    <property type="entry name" value="Phe_tRNA_ligase_alpha_bac/arc"/>
</dbReference>
<dbReference type="InterPro" id="IPR002319">
    <property type="entry name" value="Phenylalanyl-tRNA_Synthase"/>
</dbReference>
<dbReference type="InterPro" id="IPR005471">
    <property type="entry name" value="Tscrpt_reg_IclR_N"/>
</dbReference>
<dbReference type="InterPro" id="IPR036388">
    <property type="entry name" value="WH-like_DNA-bd_sf"/>
</dbReference>
<dbReference type="InterPro" id="IPR036390">
    <property type="entry name" value="WH_DNA-bd_sf"/>
</dbReference>
<dbReference type="NCBIfam" id="TIGR00468">
    <property type="entry name" value="pheS"/>
    <property type="match status" value="1"/>
</dbReference>
<dbReference type="NCBIfam" id="NF003210">
    <property type="entry name" value="PRK04172.1"/>
    <property type="match status" value="1"/>
</dbReference>
<dbReference type="PANTHER" id="PTHR11538:SF40">
    <property type="entry name" value="PHENYLALANINE--TRNA LIGASE ALPHA SUBUNIT"/>
    <property type="match status" value="1"/>
</dbReference>
<dbReference type="PANTHER" id="PTHR11538">
    <property type="entry name" value="PHENYLALANYL-TRNA SYNTHETASE"/>
    <property type="match status" value="1"/>
</dbReference>
<dbReference type="Pfam" id="PF09339">
    <property type="entry name" value="HTH_IclR"/>
    <property type="match status" value="1"/>
</dbReference>
<dbReference type="Pfam" id="PF01409">
    <property type="entry name" value="tRNA-synt_2d"/>
    <property type="match status" value="1"/>
</dbReference>
<dbReference type="SUPFAM" id="SSF55681">
    <property type="entry name" value="Class II aaRS and biotin synthetases"/>
    <property type="match status" value="1"/>
</dbReference>
<dbReference type="SUPFAM" id="SSF46785">
    <property type="entry name" value="Winged helix' DNA-binding domain"/>
    <property type="match status" value="1"/>
</dbReference>
<dbReference type="PROSITE" id="PS50862">
    <property type="entry name" value="AA_TRNA_LIGASE_II"/>
    <property type="match status" value="1"/>
</dbReference>
<gene>
    <name evidence="1" type="primary">pheS</name>
    <name type="ordered locus">Msed_2124</name>
</gene>
<name>SYFA_METS5</name>
<keyword id="KW-0030">Aminoacyl-tRNA synthetase</keyword>
<keyword id="KW-0067">ATP-binding</keyword>
<keyword id="KW-0963">Cytoplasm</keyword>
<keyword id="KW-0436">Ligase</keyword>
<keyword id="KW-0460">Magnesium</keyword>
<keyword id="KW-0479">Metal-binding</keyword>
<keyword id="KW-0547">Nucleotide-binding</keyword>
<keyword id="KW-0648">Protein biosynthesis</keyword>
<keyword id="KW-1185">Reference proteome</keyword>
<evidence type="ECO:0000255" key="1">
    <source>
        <dbReference type="HAMAP-Rule" id="MF_00282"/>
    </source>
</evidence>
<comment type="catalytic activity">
    <reaction evidence="1">
        <text>tRNA(Phe) + L-phenylalanine + ATP = L-phenylalanyl-tRNA(Phe) + AMP + diphosphate + H(+)</text>
        <dbReference type="Rhea" id="RHEA:19413"/>
        <dbReference type="Rhea" id="RHEA-COMP:9668"/>
        <dbReference type="Rhea" id="RHEA-COMP:9699"/>
        <dbReference type="ChEBI" id="CHEBI:15378"/>
        <dbReference type="ChEBI" id="CHEBI:30616"/>
        <dbReference type="ChEBI" id="CHEBI:33019"/>
        <dbReference type="ChEBI" id="CHEBI:58095"/>
        <dbReference type="ChEBI" id="CHEBI:78442"/>
        <dbReference type="ChEBI" id="CHEBI:78531"/>
        <dbReference type="ChEBI" id="CHEBI:456215"/>
        <dbReference type="EC" id="6.1.1.20"/>
    </reaction>
</comment>
<comment type="cofactor">
    <cofactor evidence="1">
        <name>Mg(2+)</name>
        <dbReference type="ChEBI" id="CHEBI:18420"/>
    </cofactor>
    <text evidence="1">Binds 2 magnesium ions per tetramer.</text>
</comment>
<comment type="subunit">
    <text evidence="1">Tetramer of two alpha and two beta subunits.</text>
</comment>
<comment type="subcellular location">
    <subcellularLocation>
        <location evidence="1">Cytoplasm</location>
    </subcellularLocation>
</comment>
<comment type="similarity">
    <text evidence="1">Belongs to the class-II aminoacyl-tRNA synthetase family. Phe-tRNA synthetase alpha subunit type 2 subfamily.</text>
</comment>
<reference key="1">
    <citation type="journal article" date="2008" name="Appl. Environ. Microbiol.">
        <title>The genome sequence of the metal-mobilizing, extremely thermoacidophilic archaeon Metallosphaera sedula provides insights into bioleaching-associated metabolism.</title>
        <authorList>
            <person name="Auernik K.S."/>
            <person name="Maezato Y."/>
            <person name="Blum P.H."/>
            <person name="Kelly R.M."/>
        </authorList>
    </citation>
    <scope>NUCLEOTIDE SEQUENCE [LARGE SCALE GENOMIC DNA]</scope>
    <source>
        <strain>ATCC 51363 / DSM 5348 / JCM 9185 / NBRC 15509 / TH2</strain>
    </source>
</reference>
<protein>
    <recommendedName>
        <fullName evidence="1">Phenylalanine--tRNA ligase alpha subunit</fullName>
        <ecNumber evidence="1">6.1.1.20</ecNumber>
    </recommendedName>
    <alternativeName>
        <fullName evidence="1">Phenylalanyl-tRNA synthetase alpha subunit</fullName>
        <shortName evidence="1">PheRS</shortName>
    </alternativeName>
</protein>